<keyword id="KW-0007">Acetylation</keyword>
<keyword id="KW-0049">Antioxidant</keyword>
<keyword id="KW-0186">Copper</keyword>
<keyword id="KW-0963">Cytoplasm</keyword>
<keyword id="KW-0903">Direct protein sequencing</keyword>
<keyword id="KW-1015">Disulfide bond</keyword>
<keyword id="KW-0449">Lipoprotein</keyword>
<keyword id="KW-0479">Metal-binding</keyword>
<keyword id="KW-0539">Nucleus</keyword>
<keyword id="KW-0560">Oxidoreductase</keyword>
<keyword id="KW-0564">Palmitate</keyword>
<keyword id="KW-0597">Phosphoprotein</keyword>
<keyword id="KW-1185">Reference proteome</keyword>
<keyword id="KW-0862">Zinc</keyword>
<accession>P33431</accession>
<reference key="1">
    <citation type="journal article" date="1996" name="Biochim. Biophys. Acta">
        <title>Differential patterns of antioxidant enzyme mRNA expression in guinea pig lung and liver during development.</title>
        <authorList>
            <person name="Yuan H.T."/>
            <person name="Bingle C.D."/>
            <person name="Kelly F.J."/>
        </authorList>
    </citation>
    <scope>NUCLEOTIDE SEQUENCE [MRNA]</scope>
    <source>
        <strain>Hartley</strain>
        <tissue>Lung</tissue>
    </source>
</reference>
<reference key="2">
    <citation type="journal article" date="1993" name="Biol. Chem. Hoppe-Seyler">
        <title>Taxonomical classification of the guinea pig based on its Cu/Zn superoxide dismutase sequence.</title>
        <authorList>
            <person name="Wolf B."/>
            <person name="Reinecke K."/>
            <person name="Aumann K.-D."/>
            <person name="Brigelius-Flohe R."/>
            <person name="Flohe L."/>
        </authorList>
    </citation>
    <scope>PROTEIN SEQUENCE OF 2-153</scope>
    <source>
        <tissue>Liver</tissue>
    </source>
</reference>
<protein>
    <recommendedName>
        <fullName evidence="2">Superoxide dismutase [Cu-Zn]</fullName>
        <ecNumber evidence="2">1.15.1.1</ecNumber>
    </recommendedName>
</protein>
<dbReference type="EC" id="1.15.1.1" evidence="2"/>
<dbReference type="EMBL" id="U39844">
    <property type="protein sequence ID" value="AAC52720.1"/>
    <property type="molecule type" value="mRNA"/>
</dbReference>
<dbReference type="PIR" id="S36108">
    <property type="entry name" value="S36108"/>
</dbReference>
<dbReference type="RefSeq" id="XP_003467296.1">
    <property type="nucleotide sequence ID" value="XM_003467248.3"/>
</dbReference>
<dbReference type="SMR" id="P33431"/>
<dbReference type="FunCoup" id="P33431">
    <property type="interactions" value="1819"/>
</dbReference>
<dbReference type="STRING" id="10141.ENSCPOP00000012815"/>
<dbReference type="Ensembl" id="ENSCPOT00000014365.3">
    <property type="protein sequence ID" value="ENSCPOP00000012815.3"/>
    <property type="gene ID" value="ENSCPOG00000014223.4"/>
</dbReference>
<dbReference type="GeneID" id="100135622"/>
<dbReference type="KEGG" id="cpoc:100135622"/>
<dbReference type="CTD" id="6647"/>
<dbReference type="VEuPathDB" id="HostDB:ENSCPOG00000014223"/>
<dbReference type="eggNOG" id="KOG0441">
    <property type="taxonomic scope" value="Eukaryota"/>
</dbReference>
<dbReference type="GeneTree" id="ENSGT00940000155551"/>
<dbReference type="HOGENOM" id="CLU_056632_4_1_1"/>
<dbReference type="InParanoid" id="P33431"/>
<dbReference type="OMA" id="AQRGFHI"/>
<dbReference type="OrthoDB" id="2015551at2759"/>
<dbReference type="Proteomes" id="UP000005447">
    <property type="component" value="Unassembled WGS sequence"/>
</dbReference>
<dbReference type="Bgee" id="ENSCPOG00000014223">
    <property type="expression patterns" value="Expressed in adrenal gland and 13 other cell types or tissues"/>
</dbReference>
<dbReference type="GO" id="GO:1904115">
    <property type="term" value="C:axon cytoplasm"/>
    <property type="evidence" value="ECO:0007669"/>
    <property type="project" value="GOC"/>
</dbReference>
<dbReference type="GO" id="GO:0005737">
    <property type="term" value="C:cytoplasm"/>
    <property type="evidence" value="ECO:0000250"/>
    <property type="project" value="UniProtKB"/>
</dbReference>
<dbReference type="GO" id="GO:0031410">
    <property type="term" value="C:cytoplasmic vesicle"/>
    <property type="evidence" value="ECO:0000250"/>
    <property type="project" value="UniProtKB"/>
</dbReference>
<dbReference type="GO" id="GO:0005829">
    <property type="term" value="C:cytosol"/>
    <property type="evidence" value="ECO:0000250"/>
    <property type="project" value="UniProtKB"/>
</dbReference>
<dbReference type="GO" id="GO:0032839">
    <property type="term" value="C:dendrite cytoplasm"/>
    <property type="evidence" value="ECO:0000250"/>
    <property type="project" value="UniProtKB"/>
</dbReference>
<dbReference type="GO" id="GO:0005615">
    <property type="term" value="C:extracellular space"/>
    <property type="evidence" value="ECO:0007669"/>
    <property type="project" value="Ensembl"/>
</dbReference>
<dbReference type="GO" id="GO:0005739">
    <property type="term" value="C:mitochondrion"/>
    <property type="evidence" value="ECO:0000250"/>
    <property type="project" value="UniProtKB"/>
</dbReference>
<dbReference type="GO" id="GO:0043025">
    <property type="term" value="C:neuronal cell body"/>
    <property type="evidence" value="ECO:0000250"/>
    <property type="project" value="UniProtKB"/>
</dbReference>
<dbReference type="GO" id="GO:0005654">
    <property type="term" value="C:nucleoplasm"/>
    <property type="evidence" value="ECO:0007669"/>
    <property type="project" value="Ensembl"/>
</dbReference>
<dbReference type="GO" id="GO:0005634">
    <property type="term" value="C:nucleus"/>
    <property type="evidence" value="ECO:0000250"/>
    <property type="project" value="UniProtKB"/>
</dbReference>
<dbReference type="GO" id="GO:0005777">
    <property type="term" value="C:peroxisome"/>
    <property type="evidence" value="ECO:0007669"/>
    <property type="project" value="Ensembl"/>
</dbReference>
<dbReference type="GO" id="GO:0005886">
    <property type="term" value="C:plasma membrane"/>
    <property type="evidence" value="ECO:0007669"/>
    <property type="project" value="Ensembl"/>
</dbReference>
<dbReference type="GO" id="GO:0032991">
    <property type="term" value="C:protein-containing complex"/>
    <property type="evidence" value="ECO:0000250"/>
    <property type="project" value="UniProtKB"/>
</dbReference>
<dbReference type="GO" id="GO:0005507">
    <property type="term" value="F:copper ion binding"/>
    <property type="evidence" value="ECO:0000250"/>
    <property type="project" value="UniProtKB"/>
</dbReference>
<dbReference type="GO" id="GO:0042803">
    <property type="term" value="F:protein homodimerization activity"/>
    <property type="evidence" value="ECO:0007669"/>
    <property type="project" value="Ensembl"/>
</dbReference>
<dbReference type="GO" id="GO:0030346">
    <property type="term" value="F:protein phosphatase 2B binding"/>
    <property type="evidence" value="ECO:0000250"/>
    <property type="project" value="UniProtKB"/>
</dbReference>
<dbReference type="GO" id="GO:0051087">
    <property type="term" value="F:protein-folding chaperone binding"/>
    <property type="evidence" value="ECO:0000250"/>
    <property type="project" value="UniProtKB"/>
</dbReference>
<dbReference type="GO" id="GO:0031267">
    <property type="term" value="F:small GTPase binding"/>
    <property type="evidence" value="ECO:0007669"/>
    <property type="project" value="Ensembl"/>
</dbReference>
<dbReference type="GO" id="GO:0004784">
    <property type="term" value="F:superoxide dismutase activity"/>
    <property type="evidence" value="ECO:0000250"/>
    <property type="project" value="UniProtKB"/>
</dbReference>
<dbReference type="GO" id="GO:0008270">
    <property type="term" value="F:zinc ion binding"/>
    <property type="evidence" value="ECO:0000250"/>
    <property type="project" value="UniProtKB"/>
</dbReference>
<dbReference type="GO" id="GO:0099610">
    <property type="term" value="P:action potential initiation"/>
    <property type="evidence" value="ECO:0007669"/>
    <property type="project" value="Ensembl"/>
</dbReference>
<dbReference type="GO" id="GO:0008089">
    <property type="term" value="P:anterograde axonal transport"/>
    <property type="evidence" value="ECO:0007669"/>
    <property type="project" value="Ensembl"/>
</dbReference>
<dbReference type="GO" id="GO:0006915">
    <property type="term" value="P:apoptotic process"/>
    <property type="evidence" value="ECO:0007669"/>
    <property type="project" value="Ensembl"/>
</dbReference>
<dbReference type="GO" id="GO:0060088">
    <property type="term" value="P:auditory receptor cell stereocilium organization"/>
    <property type="evidence" value="ECO:0000250"/>
    <property type="project" value="UniProtKB"/>
</dbReference>
<dbReference type="GO" id="GO:0008340">
    <property type="term" value="P:determination of adult lifespan"/>
    <property type="evidence" value="ECO:0007669"/>
    <property type="project" value="Ensembl"/>
</dbReference>
<dbReference type="GO" id="GO:0035234">
    <property type="term" value="P:ectopic germ cell programmed cell death"/>
    <property type="evidence" value="ECO:0007669"/>
    <property type="project" value="Ensembl"/>
</dbReference>
<dbReference type="GO" id="GO:0007566">
    <property type="term" value="P:embryo implantation"/>
    <property type="evidence" value="ECO:0000250"/>
    <property type="project" value="UniProtKB"/>
</dbReference>
<dbReference type="GO" id="GO:0010467">
    <property type="term" value="P:gene expression"/>
    <property type="evidence" value="ECO:0007669"/>
    <property type="project" value="Ensembl"/>
</dbReference>
<dbReference type="GO" id="GO:0006749">
    <property type="term" value="P:glutathione metabolic process"/>
    <property type="evidence" value="ECO:0000250"/>
    <property type="project" value="UniProtKB"/>
</dbReference>
<dbReference type="GO" id="GO:0060047">
    <property type="term" value="P:heart contraction"/>
    <property type="evidence" value="ECO:0000250"/>
    <property type="project" value="UniProtKB"/>
</dbReference>
<dbReference type="GO" id="GO:0050665">
    <property type="term" value="P:hydrogen peroxide biosynthetic process"/>
    <property type="evidence" value="ECO:0000250"/>
    <property type="project" value="UniProtKB"/>
</dbReference>
<dbReference type="GO" id="GO:0006879">
    <property type="term" value="P:intracellular iron ion homeostasis"/>
    <property type="evidence" value="ECO:0000250"/>
    <property type="project" value="UniProtKB"/>
</dbReference>
<dbReference type="GO" id="GO:0007626">
    <property type="term" value="P:locomotory behavior"/>
    <property type="evidence" value="ECO:0000250"/>
    <property type="project" value="UniProtKB"/>
</dbReference>
<dbReference type="GO" id="GO:0046716">
    <property type="term" value="P:muscle cell cellular homeostasis"/>
    <property type="evidence" value="ECO:0000250"/>
    <property type="project" value="UniProtKB"/>
</dbReference>
<dbReference type="GO" id="GO:0002262">
    <property type="term" value="P:myeloid cell homeostasis"/>
    <property type="evidence" value="ECO:0000250"/>
    <property type="project" value="UniProtKB"/>
</dbReference>
<dbReference type="GO" id="GO:0051093">
    <property type="term" value="P:negative regulation of developmental process"/>
    <property type="evidence" value="ECO:0007669"/>
    <property type="project" value="Ensembl"/>
</dbReference>
<dbReference type="GO" id="GO:0050728">
    <property type="term" value="P:negative regulation of inflammatory response"/>
    <property type="evidence" value="ECO:0007669"/>
    <property type="project" value="Ensembl"/>
</dbReference>
<dbReference type="GO" id="GO:0043524">
    <property type="term" value="P:negative regulation of neuron apoptotic process"/>
    <property type="evidence" value="ECO:0000250"/>
    <property type="project" value="UniProtKB"/>
</dbReference>
<dbReference type="GO" id="GO:2000242">
    <property type="term" value="P:negative regulation of reproductive process"/>
    <property type="evidence" value="ECO:0007669"/>
    <property type="project" value="Ensembl"/>
</dbReference>
<dbReference type="GO" id="GO:0060052">
    <property type="term" value="P:neurofilament cytoskeleton organization"/>
    <property type="evidence" value="ECO:0000250"/>
    <property type="project" value="UniProtKB"/>
</dbReference>
<dbReference type="GO" id="GO:0019228">
    <property type="term" value="P:neuronal action potential"/>
    <property type="evidence" value="ECO:0007669"/>
    <property type="project" value="Ensembl"/>
</dbReference>
<dbReference type="GO" id="GO:0001541">
    <property type="term" value="P:ovarian follicle development"/>
    <property type="evidence" value="ECO:0000250"/>
    <property type="project" value="UniProtKB"/>
</dbReference>
<dbReference type="GO" id="GO:0032287">
    <property type="term" value="P:peripheral nervous system myelin maintenance"/>
    <property type="evidence" value="ECO:0000250"/>
    <property type="project" value="UniProtKB"/>
</dbReference>
<dbReference type="GO" id="GO:0001819">
    <property type="term" value="P:positive regulation of cytokine production"/>
    <property type="evidence" value="ECO:0000250"/>
    <property type="project" value="UniProtKB"/>
</dbReference>
<dbReference type="GO" id="GO:0043410">
    <property type="term" value="P:positive regulation of MAPK cascade"/>
    <property type="evidence" value="ECO:0000250"/>
    <property type="project" value="UniProtKB"/>
</dbReference>
<dbReference type="GO" id="GO:1902177">
    <property type="term" value="P:positive regulation of oxidative stress-induced intrinsic apoptotic signaling pathway"/>
    <property type="evidence" value="ECO:0007669"/>
    <property type="project" value="Ensembl"/>
</dbReference>
<dbReference type="GO" id="GO:0050766">
    <property type="term" value="P:positive regulation of phagocytosis"/>
    <property type="evidence" value="ECO:0007669"/>
    <property type="project" value="Ensembl"/>
</dbReference>
<dbReference type="GO" id="GO:0032930">
    <property type="term" value="P:positive regulation of superoxide anion generation"/>
    <property type="evidence" value="ECO:0007669"/>
    <property type="project" value="Ensembl"/>
</dbReference>
<dbReference type="GO" id="GO:0072593">
    <property type="term" value="P:reactive oxygen species metabolic process"/>
    <property type="evidence" value="ECO:0000250"/>
    <property type="project" value="UniProtKB"/>
</dbReference>
<dbReference type="GO" id="GO:0008217">
    <property type="term" value="P:regulation of blood pressure"/>
    <property type="evidence" value="ECO:0000250"/>
    <property type="project" value="UniProtKB"/>
</dbReference>
<dbReference type="GO" id="GO:0051881">
    <property type="term" value="P:regulation of mitochondrial membrane potential"/>
    <property type="evidence" value="ECO:0000250"/>
    <property type="project" value="UniProtKB"/>
</dbReference>
<dbReference type="GO" id="GO:0040014">
    <property type="term" value="P:regulation of multicellular organism growth"/>
    <property type="evidence" value="ECO:0000250"/>
    <property type="project" value="UniProtKB"/>
</dbReference>
<dbReference type="GO" id="GO:0060087">
    <property type="term" value="P:relaxation of vascular associated smooth muscle"/>
    <property type="evidence" value="ECO:0000250"/>
    <property type="project" value="UniProtKB"/>
</dbReference>
<dbReference type="GO" id="GO:0019430">
    <property type="term" value="P:removal of superoxide radicals"/>
    <property type="evidence" value="ECO:0000250"/>
    <property type="project" value="UniProtKB"/>
</dbReference>
<dbReference type="GO" id="GO:0048678">
    <property type="term" value="P:response to axon injury"/>
    <property type="evidence" value="ECO:0000250"/>
    <property type="project" value="UniProtKB"/>
</dbReference>
<dbReference type="GO" id="GO:0045471">
    <property type="term" value="P:response to ethanol"/>
    <property type="evidence" value="ECO:0000250"/>
    <property type="project" value="UniProtKB"/>
</dbReference>
<dbReference type="GO" id="GO:0009408">
    <property type="term" value="P:response to heat"/>
    <property type="evidence" value="ECO:0000250"/>
    <property type="project" value="UniProtKB"/>
</dbReference>
<dbReference type="GO" id="GO:0042542">
    <property type="term" value="P:response to hydrogen peroxide"/>
    <property type="evidence" value="ECO:0000250"/>
    <property type="project" value="UniProtKB"/>
</dbReference>
<dbReference type="GO" id="GO:0000303">
    <property type="term" value="P:response to superoxide"/>
    <property type="evidence" value="ECO:0000250"/>
    <property type="project" value="UniProtKB"/>
</dbReference>
<dbReference type="GO" id="GO:0009410">
    <property type="term" value="P:response to xenobiotic stimulus"/>
    <property type="evidence" value="ECO:0007669"/>
    <property type="project" value="Ensembl"/>
</dbReference>
<dbReference type="GO" id="GO:0001895">
    <property type="term" value="P:retina homeostasis"/>
    <property type="evidence" value="ECO:0000250"/>
    <property type="project" value="UniProtKB"/>
</dbReference>
<dbReference type="GO" id="GO:0008090">
    <property type="term" value="P:retrograde axonal transport"/>
    <property type="evidence" value="ECO:0007669"/>
    <property type="project" value="Ensembl"/>
</dbReference>
<dbReference type="GO" id="GO:0007605">
    <property type="term" value="P:sensory perception of sound"/>
    <property type="evidence" value="ECO:0000250"/>
    <property type="project" value="UniProtKB"/>
</dbReference>
<dbReference type="GO" id="GO:0007283">
    <property type="term" value="P:spermatogenesis"/>
    <property type="evidence" value="ECO:0000250"/>
    <property type="project" value="UniProtKB"/>
</dbReference>
<dbReference type="GO" id="GO:0042554">
    <property type="term" value="P:superoxide anion generation"/>
    <property type="evidence" value="ECO:0007669"/>
    <property type="project" value="Ensembl"/>
</dbReference>
<dbReference type="GO" id="GO:0006801">
    <property type="term" value="P:superoxide metabolic process"/>
    <property type="evidence" value="ECO:0000250"/>
    <property type="project" value="UniProtKB"/>
</dbReference>
<dbReference type="GO" id="GO:0019226">
    <property type="term" value="P:transmission of nerve impulse"/>
    <property type="evidence" value="ECO:0000250"/>
    <property type="project" value="UniProtKB"/>
</dbReference>
<dbReference type="CDD" id="cd00305">
    <property type="entry name" value="Cu-Zn_Superoxide_Dismutase"/>
    <property type="match status" value="1"/>
</dbReference>
<dbReference type="FunFam" id="2.60.40.200:FF:000001">
    <property type="entry name" value="Superoxide dismutase [Cu-Zn]"/>
    <property type="match status" value="1"/>
</dbReference>
<dbReference type="Gene3D" id="2.60.40.200">
    <property type="entry name" value="Superoxide dismutase, copper/zinc binding domain"/>
    <property type="match status" value="1"/>
</dbReference>
<dbReference type="InterPro" id="IPR036423">
    <property type="entry name" value="SOD-like_Cu/Zn_dom_sf"/>
</dbReference>
<dbReference type="InterPro" id="IPR024134">
    <property type="entry name" value="SOD_Cu/Zn_/chaperone"/>
</dbReference>
<dbReference type="InterPro" id="IPR018152">
    <property type="entry name" value="SOD_Cu/Zn_BS"/>
</dbReference>
<dbReference type="InterPro" id="IPR001424">
    <property type="entry name" value="SOD_Cu_Zn_dom"/>
</dbReference>
<dbReference type="PANTHER" id="PTHR10003">
    <property type="entry name" value="SUPEROXIDE DISMUTASE CU-ZN -RELATED"/>
    <property type="match status" value="1"/>
</dbReference>
<dbReference type="Pfam" id="PF00080">
    <property type="entry name" value="Sod_Cu"/>
    <property type="match status" value="1"/>
</dbReference>
<dbReference type="PRINTS" id="PR00068">
    <property type="entry name" value="CUZNDISMTASE"/>
</dbReference>
<dbReference type="SUPFAM" id="SSF49329">
    <property type="entry name" value="Cu,Zn superoxide dismutase-like"/>
    <property type="match status" value="1"/>
</dbReference>
<dbReference type="PROSITE" id="PS00087">
    <property type="entry name" value="SOD_CU_ZN_1"/>
    <property type="match status" value="1"/>
</dbReference>
<dbReference type="PROSITE" id="PS00332">
    <property type="entry name" value="SOD_CU_ZN_2"/>
    <property type="match status" value="1"/>
</dbReference>
<gene>
    <name evidence="2" type="primary">SOD1</name>
</gene>
<sequence length="153" mass="15670">MATKAVCVLKGDGPVQGIIHFEQKANGPVVVKGRITGLVEGKHGFHVHEFGDNTQGCTSAGPHFNPLSKKHGGPQDEERHVGDLGNVTAGADGVANVSIEDSLISLSGANSIIGRTMVVHEKPDDLGKGGNEESTKTGNAGSRLACGVIGIAQ</sequence>
<feature type="initiator methionine" description="Removed" evidence="3 6">
    <location>
        <position position="1"/>
    </location>
</feature>
<feature type="chain" id="PRO_0000164053" description="Superoxide dismutase [Cu-Zn]">
    <location>
        <begin position="2"/>
        <end position="153"/>
    </location>
</feature>
<feature type="binding site" evidence="1">
    <location>
        <position position="46"/>
    </location>
    <ligand>
        <name>Cu cation</name>
        <dbReference type="ChEBI" id="CHEBI:23378"/>
        <note>catalytic</note>
    </ligand>
</feature>
<feature type="binding site" evidence="1">
    <location>
        <position position="48"/>
    </location>
    <ligand>
        <name>Cu cation</name>
        <dbReference type="ChEBI" id="CHEBI:23378"/>
        <note>catalytic</note>
    </ligand>
</feature>
<feature type="binding site" evidence="1">
    <location>
        <position position="63"/>
    </location>
    <ligand>
        <name>Cu cation</name>
        <dbReference type="ChEBI" id="CHEBI:23378"/>
        <note>catalytic</note>
    </ligand>
</feature>
<feature type="binding site" evidence="1">
    <location>
        <position position="63"/>
    </location>
    <ligand>
        <name>Zn(2+)</name>
        <dbReference type="ChEBI" id="CHEBI:29105"/>
        <note>structural</note>
    </ligand>
</feature>
<feature type="binding site" evidence="1">
    <location>
        <position position="71"/>
    </location>
    <ligand>
        <name>Zn(2+)</name>
        <dbReference type="ChEBI" id="CHEBI:29105"/>
        <note>structural</note>
    </ligand>
</feature>
<feature type="binding site" evidence="1">
    <location>
        <position position="80"/>
    </location>
    <ligand>
        <name>Zn(2+)</name>
        <dbReference type="ChEBI" id="CHEBI:29105"/>
        <note>structural</note>
    </ligand>
</feature>
<feature type="binding site" evidence="1">
    <location>
        <position position="83"/>
    </location>
    <ligand>
        <name>Zn(2+)</name>
        <dbReference type="ChEBI" id="CHEBI:29105"/>
        <note>structural</note>
    </ligand>
</feature>
<feature type="binding site" evidence="1">
    <location>
        <position position="120"/>
    </location>
    <ligand>
        <name>Cu cation</name>
        <dbReference type="ChEBI" id="CHEBI:23378"/>
        <note>catalytic</note>
    </ligand>
</feature>
<feature type="modified residue" description="N-acetylalanine" evidence="3">
    <location>
        <position position="2"/>
    </location>
</feature>
<feature type="modified residue" description="N6-succinyllysine" evidence="5">
    <location>
        <position position="4"/>
    </location>
</feature>
<feature type="modified residue" description="N6-succinyllysine" evidence="5">
    <location>
        <position position="10"/>
    </location>
</feature>
<feature type="modified residue" description="Phosphoserine" evidence="2">
    <location>
        <position position="98"/>
    </location>
</feature>
<feature type="modified residue" description="Phosphoserine" evidence="2">
    <location>
        <position position="102"/>
    </location>
</feature>
<feature type="modified residue" description="Phosphoserine" evidence="4">
    <location>
        <position position="105"/>
    </location>
</feature>
<feature type="modified residue" description="Phosphoserine" evidence="5">
    <location>
        <position position="107"/>
    </location>
</feature>
<feature type="modified residue" description="N6-acetyllysine; alternate" evidence="2">
    <location>
        <position position="122"/>
    </location>
</feature>
<feature type="modified residue" description="N6-succinyllysine; alternate" evidence="2">
    <location>
        <position position="122"/>
    </location>
</feature>
<feature type="modified residue" description="N6-acetyllysine; alternate" evidence="5">
    <location>
        <position position="136"/>
    </location>
</feature>
<feature type="modified residue" description="N6-succinyllysine; alternate" evidence="5">
    <location>
        <position position="136"/>
    </location>
</feature>
<feature type="lipid moiety-binding region" description="S-palmitoyl cysteine" evidence="1">
    <location>
        <position position="7"/>
    </location>
</feature>
<feature type="disulfide bond" evidence="1">
    <location>
        <begin position="57"/>
        <end position="146"/>
    </location>
</feature>
<feature type="sequence conflict" description="In Ref. 2; AA sequence." evidence="7" ref="2">
    <original>LI</original>
    <variation>IL</variation>
    <location>
        <begin position="103"/>
        <end position="104"/>
    </location>
</feature>
<organism>
    <name type="scientific">Cavia porcellus</name>
    <name type="common">Guinea pig</name>
    <dbReference type="NCBI Taxonomy" id="10141"/>
    <lineage>
        <taxon>Eukaryota</taxon>
        <taxon>Metazoa</taxon>
        <taxon>Chordata</taxon>
        <taxon>Craniata</taxon>
        <taxon>Vertebrata</taxon>
        <taxon>Euteleostomi</taxon>
        <taxon>Mammalia</taxon>
        <taxon>Eutheria</taxon>
        <taxon>Euarchontoglires</taxon>
        <taxon>Glires</taxon>
        <taxon>Rodentia</taxon>
        <taxon>Hystricomorpha</taxon>
        <taxon>Caviidae</taxon>
        <taxon>Cavia</taxon>
    </lineage>
</organism>
<comment type="function">
    <text>Destroys radicals which are normally produced within the cells and which are toxic to biological systems.</text>
</comment>
<comment type="catalytic activity">
    <reaction>
        <text>2 superoxide + 2 H(+) = H2O2 + O2</text>
        <dbReference type="Rhea" id="RHEA:20696"/>
        <dbReference type="ChEBI" id="CHEBI:15378"/>
        <dbReference type="ChEBI" id="CHEBI:15379"/>
        <dbReference type="ChEBI" id="CHEBI:16240"/>
        <dbReference type="ChEBI" id="CHEBI:18421"/>
        <dbReference type="EC" id="1.15.1.1"/>
    </reaction>
</comment>
<comment type="cofactor">
    <cofactor evidence="1">
        <name>Cu cation</name>
        <dbReference type="ChEBI" id="CHEBI:23378"/>
    </cofactor>
    <text evidence="1">Binds 1 copper ion per subunit.</text>
</comment>
<comment type="cofactor">
    <cofactor evidence="1">
        <name>Zn(2+)</name>
        <dbReference type="ChEBI" id="CHEBI:29105"/>
    </cofactor>
    <text evidence="1">Binds 1 zinc ion per subunit.</text>
</comment>
<comment type="subunit">
    <text evidence="2 5">Homodimer; non-disulfide-linked (By similarity). Heterodimer with SOD1. The heterodimer CCS:SOD1 interacts with SLC31A1; this heterotrimer is Cu(1+)-mediated and its maintenance is regulated through SOD1 activation (By similarity).</text>
</comment>
<comment type="subcellular location">
    <subcellularLocation>
        <location>Cytoplasm</location>
    </subcellularLocation>
    <subcellularLocation>
        <location evidence="1">Nucleus</location>
    </subcellularLocation>
</comment>
<comment type="PTM">
    <text evidence="1">Palmitoylation helps nuclear targeting and decreases catalytic activity.</text>
</comment>
<comment type="PTM">
    <text evidence="2">Succinylation, adjacent to copper catalytic site, probably inhibits activity. Desuccinylation by SIRT5 enhances activity.</text>
</comment>
<comment type="similarity">
    <text evidence="7">Belongs to the Cu-Zn superoxide dismutase family.</text>
</comment>
<proteinExistence type="evidence at protein level"/>
<name>SODC_CAVPO</name>
<evidence type="ECO:0000250" key="1"/>
<evidence type="ECO:0000250" key="2">
    <source>
        <dbReference type="UniProtKB" id="P00441"/>
    </source>
</evidence>
<evidence type="ECO:0000250" key="3">
    <source>
        <dbReference type="UniProtKB" id="P00442"/>
    </source>
</evidence>
<evidence type="ECO:0000250" key="4">
    <source>
        <dbReference type="UniProtKB" id="P07632"/>
    </source>
</evidence>
<evidence type="ECO:0000250" key="5">
    <source>
        <dbReference type="UniProtKB" id="P08228"/>
    </source>
</evidence>
<evidence type="ECO:0000269" key="6">
    <source>
    </source>
</evidence>
<evidence type="ECO:0000305" key="7"/>